<organism>
    <name type="scientific">Saccharomyces cerevisiae (strain ATCC 204508 / S288c)</name>
    <name type="common">Baker's yeast</name>
    <dbReference type="NCBI Taxonomy" id="559292"/>
    <lineage>
        <taxon>Eukaryota</taxon>
        <taxon>Fungi</taxon>
        <taxon>Dikarya</taxon>
        <taxon>Ascomycota</taxon>
        <taxon>Saccharomycotina</taxon>
        <taxon>Saccharomycetes</taxon>
        <taxon>Saccharomycetales</taxon>
        <taxon>Saccharomycetaceae</taxon>
        <taxon>Saccharomyces</taxon>
    </lineage>
</organism>
<dbReference type="EMBL" id="D50617">
    <property type="status" value="NOT_ANNOTATED_CDS"/>
    <property type="molecule type" value="Genomic_DNA"/>
</dbReference>
<dbReference type="EMBL" id="BK006940">
    <property type="protein sequence ID" value="DAA12406.1"/>
    <property type="molecule type" value="Genomic_DNA"/>
</dbReference>
<dbReference type="PIR" id="S58649">
    <property type="entry name" value="S58649"/>
</dbReference>
<dbReference type="RefSeq" id="NP_116619.1">
    <property type="nucleotide sequence ID" value="NM_001184310.1"/>
</dbReference>
<dbReference type="SMR" id="P56628"/>
<dbReference type="BioGRID" id="31112">
    <property type="interactions" value="112"/>
</dbReference>
<dbReference type="ComplexPortal" id="CPX-1601">
    <property type="entry name" value="60S cytosolic large ribosomal subunit"/>
</dbReference>
<dbReference type="FunCoup" id="P56628">
    <property type="interactions" value="857"/>
</dbReference>
<dbReference type="IntAct" id="P56628">
    <property type="interactions" value="66"/>
</dbReference>
<dbReference type="STRING" id="4932.YFL034C-A"/>
<dbReference type="iPTMnet" id="P56628"/>
<dbReference type="PaxDb" id="4932-YFL034C-A"/>
<dbReference type="PeptideAtlas" id="P56628"/>
<dbReference type="EnsemblFungi" id="YFL034C-A_mRNA">
    <property type="protein sequence ID" value="YFL034C-A"/>
    <property type="gene ID" value="YFL034C-A"/>
</dbReference>
<dbReference type="GeneID" id="850509"/>
<dbReference type="KEGG" id="sce:YFL034C-A"/>
<dbReference type="AGR" id="SGD:S000006436"/>
<dbReference type="SGD" id="S000006436">
    <property type="gene designation" value="RPL22B"/>
</dbReference>
<dbReference type="VEuPathDB" id="FungiDB:YFL034C-A"/>
<dbReference type="eggNOG" id="KOG3434">
    <property type="taxonomic scope" value="Eukaryota"/>
</dbReference>
<dbReference type="GeneTree" id="ENSGT00940000169435"/>
<dbReference type="HOGENOM" id="CLU_105624_0_0_1"/>
<dbReference type="InParanoid" id="P56628"/>
<dbReference type="OMA" id="WIRFIST"/>
<dbReference type="OrthoDB" id="10259820at2759"/>
<dbReference type="BioCyc" id="YEAST:G3O-30505-MONOMER"/>
<dbReference type="BioGRID-ORCS" id="850509">
    <property type="hits" value="0 hits in 10 CRISPR screens"/>
</dbReference>
<dbReference type="PRO" id="PR:P56628"/>
<dbReference type="Proteomes" id="UP000002311">
    <property type="component" value="Chromosome VI"/>
</dbReference>
<dbReference type="RNAct" id="P56628">
    <property type="molecule type" value="protein"/>
</dbReference>
<dbReference type="GO" id="GO:0005829">
    <property type="term" value="C:cytosol"/>
    <property type="evidence" value="ECO:0000304"/>
    <property type="project" value="Reactome"/>
</dbReference>
<dbReference type="GO" id="GO:0022625">
    <property type="term" value="C:cytosolic large ribosomal subunit"/>
    <property type="evidence" value="ECO:0000314"/>
    <property type="project" value="SGD"/>
</dbReference>
<dbReference type="GO" id="GO:0003723">
    <property type="term" value="F:RNA binding"/>
    <property type="evidence" value="ECO:0000318"/>
    <property type="project" value="GO_Central"/>
</dbReference>
<dbReference type="GO" id="GO:0003735">
    <property type="term" value="F:structural constituent of ribosome"/>
    <property type="evidence" value="ECO:0000314"/>
    <property type="project" value="SGD"/>
</dbReference>
<dbReference type="GO" id="GO:0002181">
    <property type="term" value="P:cytoplasmic translation"/>
    <property type="evidence" value="ECO:0000314"/>
    <property type="project" value="SGD"/>
</dbReference>
<dbReference type="FunFam" id="3.30.1360.210:FF:000003">
    <property type="entry name" value="60S ribosomal protein L22-B"/>
    <property type="match status" value="1"/>
</dbReference>
<dbReference type="Gene3D" id="3.30.1360.210">
    <property type="match status" value="1"/>
</dbReference>
<dbReference type="InterPro" id="IPR002671">
    <property type="entry name" value="Ribosomal_eL22"/>
</dbReference>
<dbReference type="InterPro" id="IPR038526">
    <property type="entry name" value="Ribosomal_eL22_sf"/>
</dbReference>
<dbReference type="PANTHER" id="PTHR10064">
    <property type="entry name" value="60S RIBOSOMAL PROTEIN L22"/>
    <property type="match status" value="1"/>
</dbReference>
<dbReference type="PANTHER" id="PTHR10064:SF31">
    <property type="entry name" value="LARGE RIBOSOMAL SUBUNIT PROTEIN EL22A-RELATED"/>
    <property type="match status" value="1"/>
</dbReference>
<dbReference type="Pfam" id="PF01776">
    <property type="entry name" value="Ribosomal_L22e"/>
    <property type="match status" value="1"/>
</dbReference>
<accession>P56628</accession>
<accession>D6VTJ6</accession>
<sequence>MAPNTSRKQKVIKTLTVDVSSPTENGVFDPASYSKYLIDHIKVDGAVGNLGNAIEVTEDGSIVTVVSSAKFSGKYLKYLTKKYLKKNQLRDWIRFVSIRQNQYKLVFYQVTPEDADEEEDDE</sequence>
<evidence type="ECO:0000269" key="1">
    <source>
    </source>
</evidence>
<evidence type="ECO:0000269" key="2">
    <source>
    </source>
</evidence>
<evidence type="ECO:0000269" key="3">
    <source>
    </source>
</evidence>
<evidence type="ECO:0000303" key="4">
    <source>
    </source>
</evidence>
<evidence type="ECO:0000303" key="5">
    <source>
    </source>
</evidence>
<evidence type="ECO:0000305" key="6"/>
<evidence type="ECO:0000305" key="7">
    <source>
    </source>
</evidence>
<evidence type="ECO:0000305" key="8">
    <source>
    </source>
</evidence>
<proteinExistence type="evidence at protein level"/>
<reference key="1">
    <citation type="journal article" date="1995" name="Nat. Genet.">
        <title>Analysis of the nucleotide sequence of chromosome VI from Saccharomyces cerevisiae.</title>
        <authorList>
            <person name="Murakami Y."/>
            <person name="Naitou M."/>
            <person name="Hagiwara H."/>
            <person name="Shibata T."/>
            <person name="Ozawa M."/>
            <person name="Sasanuma S."/>
            <person name="Sasanuma M."/>
            <person name="Tsuchiya Y."/>
            <person name="Soeda E."/>
            <person name="Yokoyama K."/>
            <person name="Yamazaki M."/>
            <person name="Tashiro H."/>
            <person name="Eki T."/>
        </authorList>
    </citation>
    <scope>NUCLEOTIDE SEQUENCE [LARGE SCALE GENOMIC DNA]</scope>
    <source>
        <strain>ATCC 204508 / S288c</strain>
    </source>
</reference>
<reference key="2">
    <citation type="journal article" date="2014" name="G3 (Bethesda)">
        <title>The reference genome sequence of Saccharomyces cerevisiae: Then and now.</title>
        <authorList>
            <person name="Engel S.R."/>
            <person name="Dietrich F.S."/>
            <person name="Fisk D.G."/>
            <person name="Binkley G."/>
            <person name="Balakrishnan R."/>
            <person name="Costanzo M.C."/>
            <person name="Dwight S.S."/>
            <person name="Hitz B.C."/>
            <person name="Karra K."/>
            <person name="Nash R.S."/>
            <person name="Weng S."/>
            <person name="Wong E.D."/>
            <person name="Lloyd P."/>
            <person name="Skrzypek M.S."/>
            <person name="Miyasato S.R."/>
            <person name="Simison M."/>
            <person name="Cherry J.M."/>
        </authorList>
    </citation>
    <scope>GENOME REANNOTATION</scope>
    <source>
        <strain>ATCC 204508 / S288c</strain>
    </source>
</reference>
<reference key="3">
    <citation type="journal article" date="1998" name="Yeast">
        <title>The list of cytoplasmic ribosomal proteins of Saccharomyces cerevisiae.</title>
        <authorList>
            <person name="Planta R.J."/>
            <person name="Mager W.H."/>
        </authorList>
    </citation>
    <scope>NOMENCLATURE</scope>
    <scope>SUBUNIT</scope>
</reference>
<reference key="4">
    <citation type="journal article" date="2003" name="Nature">
        <title>Global analysis of protein localization in budding yeast.</title>
        <authorList>
            <person name="Huh W.-K."/>
            <person name="Falvo J.V."/>
            <person name="Gerke L.C."/>
            <person name="Carroll A.S."/>
            <person name="Howson R.W."/>
            <person name="Weissman J.S."/>
            <person name="O'Shea E.K."/>
        </authorList>
    </citation>
    <scope>SUBCELLULAR LOCATION [LARGE SCALE ANALYSIS]</scope>
</reference>
<reference key="5">
    <citation type="journal article" date="2003" name="Nature">
        <title>Global analysis of protein expression in yeast.</title>
        <authorList>
            <person name="Ghaemmaghami S."/>
            <person name="Huh W.-K."/>
            <person name="Bower K."/>
            <person name="Howson R.W."/>
            <person name="Belle A."/>
            <person name="Dephoure N."/>
            <person name="O'Shea E.K."/>
            <person name="Weissman J.S."/>
        </authorList>
    </citation>
    <scope>LEVEL OF PROTEIN EXPRESSION [LARGE SCALE ANALYSIS]</scope>
</reference>
<reference key="6">
    <citation type="journal article" date="2011" name="Science">
        <title>The structure of the eukaryotic ribosome at 3.0 A resolution.</title>
        <authorList>
            <person name="Ben-Shem A."/>
            <person name="Garreau de Loubresse N."/>
            <person name="Melnikov S."/>
            <person name="Jenner L."/>
            <person name="Yusupova G."/>
            <person name="Yusupov M."/>
        </authorList>
    </citation>
    <scope>SUBUNIT</scope>
    <scope>SUBCELLULAR LOCATION</scope>
</reference>
<reference key="7">
    <citation type="journal article" date="2014" name="Curr. Opin. Struct. Biol.">
        <title>A new system for naming ribosomal proteins.</title>
        <authorList>
            <person name="Ban N."/>
            <person name="Beckmann R."/>
            <person name="Cate J.H.D."/>
            <person name="Dinman J.D."/>
            <person name="Dragon F."/>
            <person name="Ellis S.R."/>
            <person name="Lafontaine D.L.J."/>
            <person name="Lindahl L."/>
            <person name="Liljas A."/>
            <person name="Lipton J.M."/>
            <person name="McAlear M.A."/>
            <person name="Moore P.B."/>
            <person name="Noller H.F."/>
            <person name="Ortega J."/>
            <person name="Panse V.G."/>
            <person name="Ramakrishnan V."/>
            <person name="Spahn C.M.T."/>
            <person name="Steitz T.A."/>
            <person name="Tchorzewski M."/>
            <person name="Tollervey D."/>
            <person name="Warren A.J."/>
            <person name="Williamson J.R."/>
            <person name="Wilson D."/>
            <person name="Yonath A."/>
            <person name="Yusupov M."/>
        </authorList>
    </citation>
    <scope>NOMENCLATURE</scope>
</reference>
<feature type="chain" id="PRO_0000215515" description="Large ribosomal subunit protein eL22B">
    <location>
        <begin position="1"/>
        <end position="122"/>
    </location>
</feature>
<comment type="function">
    <text evidence="7">Component of the ribosome, a large ribonucleoprotein complex responsible for the synthesis of proteins in the cell. The small ribosomal subunit (SSU) binds messenger RNAs (mRNAs) and translates the encoded message by selecting cognate aminoacyl-transfer RNA (tRNA) molecules. The large subunit (LSU) contains the ribosomal catalytic site termed the peptidyl transferase center (PTC), which catalyzes the formation of peptide bonds, thereby polymerizing the amino acids delivered by tRNAs into a polypeptide chain. The nascent polypeptides leave the ribosome through a tunnel in the LSU and interact with protein factors that function in enzymatic processing, targeting, and the membrane insertion of nascent chains at the exit of the ribosomal tunnel.</text>
</comment>
<comment type="subunit">
    <text evidence="3 8">Component of the large ribosomal subunit (LSU). Mature yeast ribosomes consist of a small (40S) and a large (60S) subunit. The 40S small subunit contains 1 molecule of ribosomal RNA (18S rRNA) and 33 different proteins (encoded by 57 genes). The large 60S subunit contains 3 rRNA molecules (25S, 5.8S and 5S rRNA) and 46 different proteins (encoded by 81 genes) (PubMed:22096102, PubMed:9559554).</text>
</comment>
<comment type="subcellular location">
    <subcellularLocation>
        <location evidence="1 3">Cytoplasm</location>
    </subcellularLocation>
</comment>
<comment type="miscellaneous">
    <text evidence="2">Present with 74700 molecules/cell in log phase SD medium.</text>
</comment>
<comment type="miscellaneous">
    <text evidence="6">There are 2 genes for eL22 in yeast.</text>
</comment>
<comment type="similarity">
    <text evidence="6">Belongs to the eukaryotic ribosomal protein eL22 family.</text>
</comment>
<protein>
    <recommendedName>
        <fullName evidence="4">Large ribosomal subunit protein eL22B</fullName>
    </recommendedName>
    <alternativeName>
        <fullName evidence="5">60S ribosomal protein L22-B</fullName>
    </alternativeName>
    <alternativeName>
        <fullName>L1c</fullName>
    </alternativeName>
    <alternativeName>
        <fullName>RP4</fullName>
    </alternativeName>
    <alternativeName>
        <fullName>YL31</fullName>
    </alternativeName>
</protein>
<keyword id="KW-0963">Cytoplasm</keyword>
<keyword id="KW-1185">Reference proteome</keyword>
<keyword id="KW-0687">Ribonucleoprotein</keyword>
<keyword id="KW-0689">Ribosomal protein</keyword>
<name>RL22B_YEAST</name>
<gene>
    <name evidence="5" type="primary">RPL22B</name>
    <name type="ordered locus">YFL034C-A</name>
    <name type="ORF">YFL034BC</name>
</gene>